<evidence type="ECO:0000255" key="1">
    <source>
        <dbReference type="HAMAP-Rule" id="MF_00432"/>
    </source>
</evidence>
<organism>
    <name type="scientific">Tupiella akineta</name>
    <name type="common">Green alga</name>
    <name type="synonym">Pseudendoclonium akinetum</name>
    <dbReference type="NCBI Taxonomy" id="160070"/>
    <lineage>
        <taxon>Eukaryota</taxon>
        <taxon>Viridiplantae</taxon>
        <taxon>Chlorophyta</taxon>
        <taxon>Ulvophyceae</taxon>
        <taxon>OUU clade</taxon>
        <taxon>Ulotrichales</taxon>
        <taxon>Tupiellaceae</taxon>
        <taxon>Tupiella</taxon>
    </lineage>
</organism>
<dbReference type="EMBL" id="AY835431">
    <property type="protein sequence ID" value="AAV80627.1"/>
    <property type="molecule type" value="Genomic_DNA"/>
</dbReference>
<dbReference type="RefSeq" id="YP_636203.1">
    <property type="nucleotide sequence ID" value="NC_008114.1"/>
</dbReference>
<dbReference type="SMR" id="Q3ZJ64"/>
<dbReference type="GeneID" id="4108807"/>
<dbReference type="GO" id="GO:0009535">
    <property type="term" value="C:chloroplast thylakoid membrane"/>
    <property type="evidence" value="ECO:0007669"/>
    <property type="project" value="UniProtKB-SubCell"/>
</dbReference>
<dbReference type="GO" id="GO:0009512">
    <property type="term" value="C:cytochrome b6f complex"/>
    <property type="evidence" value="ECO:0007669"/>
    <property type="project" value="InterPro"/>
</dbReference>
<dbReference type="GO" id="GO:0045158">
    <property type="term" value="F:electron transporter, transferring electrons within cytochrome b6/f complex of photosystem II activity"/>
    <property type="evidence" value="ECO:0007669"/>
    <property type="project" value="UniProtKB-UniRule"/>
</dbReference>
<dbReference type="GO" id="GO:0017004">
    <property type="term" value="P:cytochrome complex assembly"/>
    <property type="evidence" value="ECO:0007669"/>
    <property type="project" value="UniProtKB-UniRule"/>
</dbReference>
<dbReference type="GO" id="GO:0015979">
    <property type="term" value="P:photosynthesis"/>
    <property type="evidence" value="ECO:0007669"/>
    <property type="project" value="UniProtKB-KW"/>
</dbReference>
<dbReference type="HAMAP" id="MF_00432">
    <property type="entry name" value="Cytb6_f_PetG"/>
    <property type="match status" value="1"/>
</dbReference>
<dbReference type="InterPro" id="IPR003683">
    <property type="entry name" value="Cyt_6/f_cplx_su5"/>
</dbReference>
<dbReference type="InterPro" id="IPR036099">
    <property type="entry name" value="Cyt_6/f_cplx_su5_sf"/>
</dbReference>
<dbReference type="NCBIfam" id="NF001907">
    <property type="entry name" value="PRK00665.1"/>
    <property type="match status" value="1"/>
</dbReference>
<dbReference type="Pfam" id="PF02529">
    <property type="entry name" value="PetG"/>
    <property type="match status" value="1"/>
</dbReference>
<dbReference type="PIRSF" id="PIRSF000034">
    <property type="entry name" value="Cyt_b6-f_V"/>
    <property type="match status" value="1"/>
</dbReference>
<dbReference type="SUPFAM" id="SSF103446">
    <property type="entry name" value="PetG subunit of the cytochrome b6f complex"/>
    <property type="match status" value="1"/>
</dbReference>
<geneLocation type="chloroplast"/>
<gene>
    <name evidence="1" type="primary">petG</name>
</gene>
<protein>
    <recommendedName>
        <fullName evidence="1">Cytochrome b6-f complex subunit 5</fullName>
    </recommendedName>
    <alternativeName>
        <fullName evidence="1">Cytochrome b6-f complex subunit PetG</fullName>
    </alternativeName>
    <alternativeName>
        <fullName evidence="1">Cytochrome b6-f complex subunit V</fullName>
    </alternativeName>
</protein>
<comment type="function">
    <text evidence="1">Component of the cytochrome b6-f complex, which mediates electron transfer between photosystem II (PSII) and photosystem I (PSI), cyclic electron flow around PSI, and state transitions. PetG is required for either the stability or assembly of the cytochrome b6-f complex.</text>
</comment>
<comment type="subunit">
    <text evidence="1">The 4 large subunits of the cytochrome b6-f complex are cytochrome b6, subunit IV (17 kDa polypeptide, PetD), cytochrome f and the Rieske protein, while the 4 small subunits are PetG, PetL, PetM and PetN. The complex functions as a dimer.</text>
</comment>
<comment type="subcellular location">
    <subcellularLocation>
        <location evidence="1">Plastid</location>
        <location evidence="1">Chloroplast thylakoid membrane</location>
        <topology evidence="1">Single-pass membrane protein</topology>
    </subcellularLocation>
</comment>
<comment type="similarity">
    <text evidence="1">Belongs to the PetG family.</text>
</comment>
<proteinExistence type="inferred from homology"/>
<accession>Q3ZJ64</accession>
<name>PETG_TUPAK</name>
<feature type="chain" id="PRO_0000275505" description="Cytochrome b6-f complex subunit 5">
    <location>
        <begin position="1"/>
        <end position="37"/>
    </location>
</feature>
<feature type="transmembrane region" description="Helical" evidence="1">
    <location>
        <begin position="5"/>
        <end position="25"/>
    </location>
</feature>
<reference key="1">
    <citation type="journal article" date="2005" name="Mol. Biol. Evol.">
        <title>The chloroplast genome sequence of the green alga Pseudendoclonium akinetum (Ulvophyceae) reveals unusual structural features and new insights into the branching order of chlorophyte lineages.</title>
        <authorList>
            <person name="Pombert J.-F."/>
            <person name="Otis C."/>
            <person name="Lemieux C."/>
            <person name="Turmel M."/>
        </authorList>
    </citation>
    <scope>NUCLEOTIDE SEQUENCE [LARGE SCALE GENOMIC DNA]</scope>
    <source>
        <strain>UTEX 1912</strain>
    </source>
</reference>
<sequence length="37" mass="4034">MVEPLLSGIVLGLVPITITGLLVTAYLQYRRGDSLNF</sequence>
<keyword id="KW-0150">Chloroplast</keyword>
<keyword id="KW-0249">Electron transport</keyword>
<keyword id="KW-0472">Membrane</keyword>
<keyword id="KW-0602">Photosynthesis</keyword>
<keyword id="KW-0934">Plastid</keyword>
<keyword id="KW-0793">Thylakoid</keyword>
<keyword id="KW-0812">Transmembrane</keyword>
<keyword id="KW-1133">Transmembrane helix</keyword>
<keyword id="KW-0813">Transport</keyword>